<reference key="1">
    <citation type="journal article" date="1999" name="Science">
        <title>Genome sequence of the radioresistant bacterium Deinococcus radiodurans R1.</title>
        <authorList>
            <person name="White O."/>
            <person name="Eisen J.A."/>
            <person name="Heidelberg J.F."/>
            <person name="Hickey E.K."/>
            <person name="Peterson J.D."/>
            <person name="Dodson R.J."/>
            <person name="Haft D.H."/>
            <person name="Gwinn M.L."/>
            <person name="Nelson W.C."/>
            <person name="Richardson D.L."/>
            <person name="Moffat K.S."/>
            <person name="Qin H."/>
            <person name="Jiang L."/>
            <person name="Pamphile W."/>
            <person name="Crosby M."/>
            <person name="Shen M."/>
            <person name="Vamathevan J.J."/>
            <person name="Lam P."/>
            <person name="McDonald L.A."/>
            <person name="Utterback T.R."/>
            <person name="Zalewski C."/>
            <person name="Makarova K.S."/>
            <person name="Aravind L."/>
            <person name="Daly M.J."/>
            <person name="Minton K.W."/>
            <person name="Fleischmann R.D."/>
            <person name="Ketchum K.A."/>
            <person name="Nelson K.E."/>
            <person name="Salzberg S.L."/>
            <person name="Smith H.O."/>
            <person name="Venter J.C."/>
            <person name="Fraser C.M."/>
        </authorList>
    </citation>
    <scope>NUCLEOTIDE SEQUENCE [LARGE SCALE GENOMIC DNA]</scope>
    <source>
        <strain>ATCC 13939 / DSM 20539 / JCM 16871 / CCUG 27074 / LMG 4051 / NBRC 15346 / NCIMB 9279 / VKM B-1422 / R1</strain>
    </source>
</reference>
<gene>
    <name evidence="1" type="primary">mraY</name>
    <name type="ordered locus">DR_1835</name>
</gene>
<evidence type="ECO:0000255" key="1">
    <source>
        <dbReference type="HAMAP-Rule" id="MF_00038"/>
    </source>
</evidence>
<accession>Q9RTD0</accession>
<feature type="chain" id="PRO_0000108817" description="Phospho-N-acetylmuramoyl-pentapeptide-transferase">
    <location>
        <begin position="1"/>
        <end position="312"/>
    </location>
</feature>
<feature type="transmembrane region" description="Helical" evidence="1">
    <location>
        <begin position="1"/>
        <end position="21"/>
    </location>
</feature>
<feature type="transmembrane region" description="Helical" evidence="1">
    <location>
        <begin position="48"/>
        <end position="68"/>
    </location>
</feature>
<feature type="transmembrane region" description="Helical" evidence="1">
    <location>
        <begin position="76"/>
        <end position="96"/>
    </location>
</feature>
<feature type="transmembrane region" description="Helical" evidence="1">
    <location>
        <begin position="115"/>
        <end position="135"/>
    </location>
</feature>
<feature type="transmembrane region" description="Helical" evidence="1">
    <location>
        <begin position="140"/>
        <end position="160"/>
    </location>
</feature>
<feature type="transmembrane region" description="Helical" evidence="1">
    <location>
        <begin position="165"/>
        <end position="185"/>
    </location>
</feature>
<feature type="transmembrane region" description="Helical" evidence="1">
    <location>
        <begin position="214"/>
        <end position="234"/>
    </location>
</feature>
<feature type="transmembrane region" description="Helical" evidence="1">
    <location>
        <begin position="238"/>
        <end position="258"/>
    </location>
</feature>
<feature type="transmembrane region" description="Helical" evidence="1">
    <location>
        <begin position="289"/>
        <end position="309"/>
    </location>
</feature>
<protein>
    <recommendedName>
        <fullName evidence="1">Phospho-N-acetylmuramoyl-pentapeptide-transferase</fullName>
        <ecNumber evidence="1">2.7.8.13</ecNumber>
    </recommendedName>
    <alternativeName>
        <fullName evidence="1">UDP-MurNAc-pentapeptide phosphotransferase</fullName>
    </alternativeName>
</protein>
<sequence length="312" mass="33450">MMVVAALLSWFLLGLFIHYSKKFGWGQPIRQDGPQTHLAKEGTPTAGGVAFVLALLLVFVGLLAFGGIGQANLSREVMILLAALGMGVVGGIDDFLKIRSRKFGGKKELLAREKFPLQVLVALLFAGFAAPLASHQLLPGFMSIGGYPIFDMLFIAFVMVGSVNAFNFTDGLDGLLAGVGMIVLLPLVAVSPIAALMVAVLLGFLWFNAHPARVFMGDMGSHAIGAVAAGAYALYSDVWLLPIAAIIPVAAVLSVVIQVASVRLRKRKVFKMSPIQHHFELSGWPETHVTLRFWVVTGIATALTWWLMGGRP</sequence>
<name>MRAY_DEIRA</name>
<organism>
    <name type="scientific">Deinococcus radiodurans (strain ATCC 13939 / DSM 20539 / JCM 16871 / CCUG 27074 / LMG 4051 / NBRC 15346 / NCIMB 9279 / VKM B-1422 / R1)</name>
    <dbReference type="NCBI Taxonomy" id="243230"/>
    <lineage>
        <taxon>Bacteria</taxon>
        <taxon>Thermotogati</taxon>
        <taxon>Deinococcota</taxon>
        <taxon>Deinococci</taxon>
        <taxon>Deinococcales</taxon>
        <taxon>Deinococcaceae</taxon>
        <taxon>Deinococcus</taxon>
    </lineage>
</organism>
<proteinExistence type="inferred from homology"/>
<keyword id="KW-0131">Cell cycle</keyword>
<keyword id="KW-0132">Cell division</keyword>
<keyword id="KW-1003">Cell membrane</keyword>
<keyword id="KW-0133">Cell shape</keyword>
<keyword id="KW-0961">Cell wall biogenesis/degradation</keyword>
<keyword id="KW-0460">Magnesium</keyword>
<keyword id="KW-0472">Membrane</keyword>
<keyword id="KW-0479">Metal-binding</keyword>
<keyword id="KW-0573">Peptidoglycan synthesis</keyword>
<keyword id="KW-1185">Reference proteome</keyword>
<keyword id="KW-0808">Transferase</keyword>
<keyword id="KW-0812">Transmembrane</keyword>
<keyword id="KW-1133">Transmembrane helix</keyword>
<comment type="function">
    <text evidence="1">Catalyzes the initial step of the lipid cycle reactions in the biosynthesis of the cell wall peptidoglycan: transfers peptidoglycan precursor phospho-MurNAc-pentapeptide from UDP-MurNAc-pentapeptide onto the lipid carrier undecaprenyl phosphate, yielding undecaprenyl-pyrophosphoryl-MurNAc-pentapeptide, known as lipid I.</text>
</comment>
<comment type="catalytic activity">
    <reaction evidence="1">
        <text>UDP-N-acetyl-alpha-D-muramoyl-L-alanyl-gamma-D-glutamyl-meso-2,6-diaminopimeloyl-D-alanyl-D-alanine + di-trans,octa-cis-undecaprenyl phosphate = di-trans,octa-cis-undecaprenyl diphospho-N-acetyl-alpha-D-muramoyl-L-alanyl-D-glutamyl-meso-2,6-diaminopimeloyl-D-alanyl-D-alanine + UMP</text>
        <dbReference type="Rhea" id="RHEA:28386"/>
        <dbReference type="ChEBI" id="CHEBI:57865"/>
        <dbReference type="ChEBI" id="CHEBI:60392"/>
        <dbReference type="ChEBI" id="CHEBI:61386"/>
        <dbReference type="ChEBI" id="CHEBI:61387"/>
        <dbReference type="EC" id="2.7.8.13"/>
    </reaction>
</comment>
<comment type="cofactor">
    <cofactor evidence="1">
        <name>Mg(2+)</name>
        <dbReference type="ChEBI" id="CHEBI:18420"/>
    </cofactor>
</comment>
<comment type="pathway">
    <text evidence="1">Cell wall biogenesis; peptidoglycan biosynthesis.</text>
</comment>
<comment type="subcellular location">
    <subcellularLocation>
        <location evidence="1">Cell membrane</location>
        <topology evidence="1">Multi-pass membrane protein</topology>
    </subcellularLocation>
</comment>
<comment type="similarity">
    <text evidence="1">Belongs to the glycosyltransferase 4 family. MraY subfamily.</text>
</comment>
<dbReference type="EC" id="2.7.8.13" evidence="1"/>
<dbReference type="EMBL" id="AE000513">
    <property type="protein sequence ID" value="AAF11390.1"/>
    <property type="molecule type" value="Genomic_DNA"/>
</dbReference>
<dbReference type="PIR" id="F75346">
    <property type="entry name" value="F75346"/>
</dbReference>
<dbReference type="RefSeq" id="NP_295558.1">
    <property type="nucleotide sequence ID" value="NC_001263.1"/>
</dbReference>
<dbReference type="RefSeq" id="WP_010888470.1">
    <property type="nucleotide sequence ID" value="NC_001263.1"/>
</dbReference>
<dbReference type="SMR" id="Q9RTD0"/>
<dbReference type="FunCoup" id="Q9RTD0">
    <property type="interactions" value="425"/>
</dbReference>
<dbReference type="STRING" id="243230.DR_1835"/>
<dbReference type="PaxDb" id="243230-DR_1835"/>
<dbReference type="EnsemblBacteria" id="AAF11390">
    <property type="protein sequence ID" value="AAF11390"/>
    <property type="gene ID" value="DR_1835"/>
</dbReference>
<dbReference type="GeneID" id="69518076"/>
<dbReference type="KEGG" id="dra:DR_1835"/>
<dbReference type="PATRIC" id="fig|243230.17.peg.2048"/>
<dbReference type="eggNOG" id="COG0472">
    <property type="taxonomic scope" value="Bacteria"/>
</dbReference>
<dbReference type="HOGENOM" id="CLU_023982_0_1_0"/>
<dbReference type="InParanoid" id="Q9RTD0"/>
<dbReference type="OrthoDB" id="9805475at2"/>
<dbReference type="UniPathway" id="UPA00219"/>
<dbReference type="Proteomes" id="UP000002524">
    <property type="component" value="Chromosome 1"/>
</dbReference>
<dbReference type="GO" id="GO:0005886">
    <property type="term" value="C:plasma membrane"/>
    <property type="evidence" value="ECO:0000318"/>
    <property type="project" value="GO_Central"/>
</dbReference>
<dbReference type="GO" id="GO:0046872">
    <property type="term" value="F:metal ion binding"/>
    <property type="evidence" value="ECO:0007669"/>
    <property type="project" value="UniProtKB-KW"/>
</dbReference>
<dbReference type="GO" id="GO:0008963">
    <property type="term" value="F:phospho-N-acetylmuramoyl-pentapeptide-transferase activity"/>
    <property type="evidence" value="ECO:0007669"/>
    <property type="project" value="UniProtKB-UniRule"/>
</dbReference>
<dbReference type="GO" id="GO:0016780">
    <property type="term" value="F:phosphotransferase activity, for other substituted phosphate groups"/>
    <property type="evidence" value="ECO:0000318"/>
    <property type="project" value="GO_Central"/>
</dbReference>
<dbReference type="GO" id="GO:0051992">
    <property type="term" value="F:UDP-N-acetylmuramoyl-L-alanyl-D-glutamyl-meso-2,6-diaminopimelyl-D-alanyl-D-alanine:undecaprenyl-phosphate transferase activity"/>
    <property type="evidence" value="ECO:0007669"/>
    <property type="project" value="RHEA"/>
</dbReference>
<dbReference type="GO" id="GO:0051301">
    <property type="term" value="P:cell division"/>
    <property type="evidence" value="ECO:0007669"/>
    <property type="project" value="UniProtKB-KW"/>
</dbReference>
<dbReference type="GO" id="GO:0044038">
    <property type="term" value="P:cell wall macromolecule biosynthetic process"/>
    <property type="evidence" value="ECO:0000318"/>
    <property type="project" value="GO_Central"/>
</dbReference>
<dbReference type="GO" id="GO:0071555">
    <property type="term" value="P:cell wall organization"/>
    <property type="evidence" value="ECO:0000318"/>
    <property type="project" value="GO_Central"/>
</dbReference>
<dbReference type="GO" id="GO:0009252">
    <property type="term" value="P:peptidoglycan biosynthetic process"/>
    <property type="evidence" value="ECO:0007669"/>
    <property type="project" value="UniProtKB-UniRule"/>
</dbReference>
<dbReference type="GO" id="GO:0008360">
    <property type="term" value="P:regulation of cell shape"/>
    <property type="evidence" value="ECO:0007669"/>
    <property type="project" value="UniProtKB-KW"/>
</dbReference>
<dbReference type="CDD" id="cd06852">
    <property type="entry name" value="GT_MraY"/>
    <property type="match status" value="1"/>
</dbReference>
<dbReference type="HAMAP" id="MF_00038">
    <property type="entry name" value="MraY"/>
    <property type="match status" value="1"/>
</dbReference>
<dbReference type="InterPro" id="IPR000715">
    <property type="entry name" value="Glycosyl_transferase_4"/>
</dbReference>
<dbReference type="InterPro" id="IPR003524">
    <property type="entry name" value="PNAcMuramoyl-5peptid_Trfase"/>
</dbReference>
<dbReference type="InterPro" id="IPR018480">
    <property type="entry name" value="PNAcMuramoyl-5peptid_Trfase_CS"/>
</dbReference>
<dbReference type="NCBIfam" id="TIGR00445">
    <property type="entry name" value="mraY"/>
    <property type="match status" value="1"/>
</dbReference>
<dbReference type="PANTHER" id="PTHR22926">
    <property type="entry name" value="PHOSPHO-N-ACETYLMURAMOYL-PENTAPEPTIDE-TRANSFERASE"/>
    <property type="match status" value="1"/>
</dbReference>
<dbReference type="PANTHER" id="PTHR22926:SF5">
    <property type="entry name" value="PHOSPHO-N-ACETYLMURAMOYL-PENTAPEPTIDE-TRANSFERASE HOMOLOG"/>
    <property type="match status" value="1"/>
</dbReference>
<dbReference type="Pfam" id="PF00953">
    <property type="entry name" value="Glycos_transf_4"/>
    <property type="match status" value="1"/>
</dbReference>
<dbReference type="PROSITE" id="PS01347">
    <property type="entry name" value="MRAY_1"/>
    <property type="match status" value="1"/>
</dbReference>
<dbReference type="PROSITE" id="PS01348">
    <property type="entry name" value="MRAY_2"/>
    <property type="match status" value="1"/>
</dbReference>